<gene>
    <name evidence="1" type="primary">rplT</name>
    <name type="ordered locus">BAD_1074</name>
</gene>
<feature type="chain" id="PRO_1000048931" description="Large ribosomal subunit protein bL20">
    <location>
        <begin position="1"/>
        <end position="127"/>
    </location>
</feature>
<sequence length="127" mass="14570">MARVKRAVNAHKKRRVVLERASGYRGQRSRLYRKAKEQLLHSFTYNFRDRKARKGDFRKLWIQRINAAVRAEGITYNRFIQGLHLAGIELDRRALAELAVSDPEAFKAIVEQAKAALPADVNAPKEA</sequence>
<accession>A1A2C2</accession>
<dbReference type="EMBL" id="AP009256">
    <property type="protein sequence ID" value="BAF39855.1"/>
    <property type="molecule type" value="Genomic_DNA"/>
</dbReference>
<dbReference type="RefSeq" id="WP_003810697.1">
    <property type="nucleotide sequence ID" value="NZ_CAXVNC010000002.1"/>
</dbReference>
<dbReference type="SMR" id="A1A2C2"/>
<dbReference type="STRING" id="367928.BAD_1074"/>
<dbReference type="PaxDb" id="1680-BADO_1125"/>
<dbReference type="GeneID" id="4556492"/>
<dbReference type="KEGG" id="bad:BAD_1074"/>
<dbReference type="HOGENOM" id="CLU_123265_0_0_11"/>
<dbReference type="Proteomes" id="UP000008702">
    <property type="component" value="Chromosome"/>
</dbReference>
<dbReference type="GO" id="GO:1990904">
    <property type="term" value="C:ribonucleoprotein complex"/>
    <property type="evidence" value="ECO:0007669"/>
    <property type="project" value="UniProtKB-KW"/>
</dbReference>
<dbReference type="GO" id="GO:0005840">
    <property type="term" value="C:ribosome"/>
    <property type="evidence" value="ECO:0007669"/>
    <property type="project" value="UniProtKB-KW"/>
</dbReference>
<dbReference type="GO" id="GO:0019843">
    <property type="term" value="F:rRNA binding"/>
    <property type="evidence" value="ECO:0007669"/>
    <property type="project" value="UniProtKB-UniRule"/>
</dbReference>
<dbReference type="GO" id="GO:0003735">
    <property type="term" value="F:structural constituent of ribosome"/>
    <property type="evidence" value="ECO:0007669"/>
    <property type="project" value="InterPro"/>
</dbReference>
<dbReference type="GO" id="GO:0000027">
    <property type="term" value="P:ribosomal large subunit assembly"/>
    <property type="evidence" value="ECO:0007669"/>
    <property type="project" value="UniProtKB-UniRule"/>
</dbReference>
<dbReference type="GO" id="GO:0006412">
    <property type="term" value="P:translation"/>
    <property type="evidence" value="ECO:0007669"/>
    <property type="project" value="InterPro"/>
</dbReference>
<dbReference type="CDD" id="cd07026">
    <property type="entry name" value="Ribosomal_L20"/>
    <property type="match status" value="1"/>
</dbReference>
<dbReference type="FunFam" id="1.10.1900.20:FF:000001">
    <property type="entry name" value="50S ribosomal protein L20"/>
    <property type="match status" value="1"/>
</dbReference>
<dbReference type="Gene3D" id="6.10.160.10">
    <property type="match status" value="1"/>
</dbReference>
<dbReference type="Gene3D" id="1.10.1900.20">
    <property type="entry name" value="Ribosomal protein L20"/>
    <property type="match status" value="1"/>
</dbReference>
<dbReference type="HAMAP" id="MF_00382">
    <property type="entry name" value="Ribosomal_bL20"/>
    <property type="match status" value="1"/>
</dbReference>
<dbReference type="InterPro" id="IPR005813">
    <property type="entry name" value="Ribosomal_bL20"/>
</dbReference>
<dbReference type="InterPro" id="IPR049946">
    <property type="entry name" value="RIBOSOMAL_L20_CS"/>
</dbReference>
<dbReference type="InterPro" id="IPR035566">
    <property type="entry name" value="Ribosomal_protein_bL20_C"/>
</dbReference>
<dbReference type="NCBIfam" id="TIGR01032">
    <property type="entry name" value="rplT_bact"/>
    <property type="match status" value="1"/>
</dbReference>
<dbReference type="PANTHER" id="PTHR10986">
    <property type="entry name" value="39S RIBOSOMAL PROTEIN L20"/>
    <property type="match status" value="1"/>
</dbReference>
<dbReference type="Pfam" id="PF00453">
    <property type="entry name" value="Ribosomal_L20"/>
    <property type="match status" value="1"/>
</dbReference>
<dbReference type="PRINTS" id="PR00062">
    <property type="entry name" value="RIBOSOMALL20"/>
</dbReference>
<dbReference type="SUPFAM" id="SSF74731">
    <property type="entry name" value="Ribosomal protein L20"/>
    <property type="match status" value="1"/>
</dbReference>
<dbReference type="PROSITE" id="PS00937">
    <property type="entry name" value="RIBOSOMAL_L20"/>
    <property type="match status" value="1"/>
</dbReference>
<protein>
    <recommendedName>
        <fullName evidence="1">Large ribosomal subunit protein bL20</fullName>
    </recommendedName>
    <alternativeName>
        <fullName evidence="2">50S ribosomal protein L20</fullName>
    </alternativeName>
</protein>
<name>RL20_BIFAA</name>
<organism>
    <name type="scientific">Bifidobacterium adolescentis (strain ATCC 15703 / DSM 20083 / NCTC 11814 / E194a)</name>
    <dbReference type="NCBI Taxonomy" id="367928"/>
    <lineage>
        <taxon>Bacteria</taxon>
        <taxon>Bacillati</taxon>
        <taxon>Actinomycetota</taxon>
        <taxon>Actinomycetes</taxon>
        <taxon>Bifidobacteriales</taxon>
        <taxon>Bifidobacteriaceae</taxon>
        <taxon>Bifidobacterium</taxon>
    </lineage>
</organism>
<comment type="function">
    <text evidence="1">Binds directly to 23S ribosomal RNA and is necessary for the in vitro assembly process of the 50S ribosomal subunit. It is not involved in the protein synthesizing functions of that subunit.</text>
</comment>
<comment type="similarity">
    <text evidence="1">Belongs to the bacterial ribosomal protein bL20 family.</text>
</comment>
<reference key="1">
    <citation type="submission" date="2006-12" db="EMBL/GenBank/DDBJ databases">
        <title>Bifidobacterium adolescentis complete genome sequence.</title>
        <authorList>
            <person name="Suzuki T."/>
            <person name="Tsuda Y."/>
            <person name="Kanou N."/>
            <person name="Inoue T."/>
            <person name="Kumazaki K."/>
            <person name="Nagano S."/>
            <person name="Hirai S."/>
            <person name="Tanaka K."/>
            <person name="Watanabe K."/>
        </authorList>
    </citation>
    <scope>NUCLEOTIDE SEQUENCE [LARGE SCALE GENOMIC DNA]</scope>
    <source>
        <strain>ATCC 15703 / DSM 20083 / NCTC 11814 / E194a</strain>
    </source>
</reference>
<keyword id="KW-1185">Reference proteome</keyword>
<keyword id="KW-0687">Ribonucleoprotein</keyword>
<keyword id="KW-0689">Ribosomal protein</keyword>
<keyword id="KW-0694">RNA-binding</keyword>
<keyword id="KW-0699">rRNA-binding</keyword>
<evidence type="ECO:0000255" key="1">
    <source>
        <dbReference type="HAMAP-Rule" id="MF_00382"/>
    </source>
</evidence>
<evidence type="ECO:0000305" key="2"/>
<proteinExistence type="inferred from homology"/>